<comment type="function">
    <text evidence="1">Participates in the formation of new permeability pathways in Plasmodium-infected erythrocytes enabling the uptake of nutrients from the blood plasma (By similarity). Required for maintaining invasion capacity of merozoites (By similarity). Required for parasite growth and proliferation (By similarity).</text>
</comment>
<comment type="subunit">
    <text evidence="4">Component of the RhopH complex, composed of CLAG3.1/CLAG3.2, RhopH2 and RhopH3 with a 1:1:1 subunit stoichiometry (PubMed:34446549). Interacts with CLAG3.1/CLAG3.2 (PubMed:34446549).</text>
</comment>
<comment type="subcellular location">
    <subcellularLocation>
        <location evidence="1">Host cell membrane</location>
        <topology evidence="3">Single-pass membrane protein</topology>
    </subcellularLocation>
    <subcellularLocation>
        <location evidence="1">Host cell membrane</location>
        <topology evidence="1">Peripheral membrane protein</topology>
    </subcellularLocation>
    <subcellularLocation>
        <location evidence="1">Parasitophorous vacuole membrane</location>
        <topology evidence="3">Single-pass membrane protein</topology>
    </subcellularLocation>
    <subcellularLocation>
        <location evidence="1">Host cytoplasm</location>
    </subcellularLocation>
    <subcellularLocation>
        <location evidence="1">Cytoplasm</location>
    </subcellularLocation>
    <subcellularLocation>
        <location evidence="1">Cytoplasmic vesicle</location>
        <location evidence="1">Secretory vesicle</location>
        <location evidence="1">Rhoptry</location>
    </subcellularLocation>
    <text evidence="2">Export to host cytosol is mediated by the Plasmodium translocon of exported proteins (PTEX) complex.</text>
</comment>
<accession>A0A2I0BSI4</accession>
<keyword id="KW-0002">3D-structure</keyword>
<keyword id="KW-0963">Cytoplasm</keyword>
<keyword id="KW-0968">Cytoplasmic vesicle</keyword>
<keyword id="KW-1015">Disulfide bond</keyword>
<keyword id="KW-1032">Host cell membrane</keyword>
<keyword id="KW-1035">Host cytoplasm</keyword>
<keyword id="KW-1043">Host membrane</keyword>
<keyword id="KW-0472">Membrane</keyword>
<keyword id="KW-0732">Signal</keyword>
<keyword id="KW-0812">Transmembrane</keyword>
<keyword id="KW-1133">Transmembrane helix</keyword>
<keyword id="KW-0813">Transport</keyword>
<feature type="signal peptide" evidence="1">
    <location>
        <begin position="1"/>
        <end position="19"/>
    </location>
</feature>
<feature type="chain" id="PRO_0000460253" description="High molecular weight rhoptry protein 2" evidence="6">
    <location>
        <begin position="20"/>
        <end position="1378"/>
    </location>
</feature>
<feature type="transmembrane region" description="Helical" evidence="3">
    <location>
        <begin position="739"/>
        <end position="759"/>
    </location>
</feature>
<feature type="disulfide bond" evidence="4 11">
    <location>
        <begin position="46"/>
        <end position="71"/>
    </location>
</feature>
<feature type="disulfide bond" evidence="4 11">
    <location>
        <begin position="233"/>
        <end position="240"/>
    </location>
</feature>
<feature type="disulfide bond" evidence="4 11">
    <location>
        <begin position="791"/>
        <end position="851"/>
    </location>
</feature>
<feature type="disulfide bond" evidence="4 11">
    <location>
        <begin position="871"/>
        <end position="912"/>
    </location>
</feature>
<feature type="disulfide bond" evidence="4 11">
    <location>
        <begin position="947"/>
        <end position="1034"/>
    </location>
</feature>
<dbReference type="EMBL" id="QFXU01000008">
    <property type="protein sequence ID" value="KAF4330666.1"/>
    <property type="molecule type" value="Genomic_DNA"/>
</dbReference>
<dbReference type="EMBL" id="NYMT01000014">
    <property type="protein sequence ID" value="PKC45016.1"/>
    <property type="molecule type" value="Genomic_DNA"/>
</dbReference>
<dbReference type="PDB" id="7MRW">
    <property type="method" value="EM"/>
    <property type="resolution" value="3.72 A"/>
    <property type="chains" value="B=1-1378"/>
</dbReference>
<dbReference type="PDBsum" id="7MRW"/>
<dbReference type="EMDB" id="EMD-23959"/>
<dbReference type="SMR" id="A0A2I0BSI4"/>
<dbReference type="VEuPathDB" id="PlasmoDB:PfNF54_090034600"/>
<dbReference type="Proteomes" id="UP000232684">
    <property type="component" value="Unassembled WGS sequence"/>
</dbReference>
<dbReference type="Proteomes" id="UP000754359">
    <property type="component" value="Unassembled WGS sequence"/>
</dbReference>
<dbReference type="GO" id="GO:0031410">
    <property type="term" value="C:cytoplasmic vesicle"/>
    <property type="evidence" value="ECO:0007669"/>
    <property type="project" value="UniProtKB-KW"/>
</dbReference>
<dbReference type="GO" id="GO:0020002">
    <property type="term" value="C:host cell plasma membrane"/>
    <property type="evidence" value="ECO:0007669"/>
    <property type="project" value="UniProtKB-SubCell"/>
</dbReference>
<dbReference type="GO" id="GO:0016020">
    <property type="term" value="C:membrane"/>
    <property type="evidence" value="ECO:0007669"/>
    <property type="project" value="UniProtKB-KW"/>
</dbReference>
<dbReference type="GO" id="GO:0020008">
    <property type="term" value="C:rhoptry"/>
    <property type="evidence" value="ECO:0007669"/>
    <property type="project" value="UniProtKB-SubCell"/>
</dbReference>
<dbReference type="GO" id="GO:0020005">
    <property type="term" value="C:symbiont-containing vacuole membrane"/>
    <property type="evidence" value="ECO:0007669"/>
    <property type="project" value="UniProtKB-SubCell"/>
</dbReference>
<protein>
    <recommendedName>
        <fullName evidence="6">High molecular weight rhoptry protein 2</fullName>
    </recommendedName>
</protein>
<reference evidence="9" key="1">
    <citation type="submission" date="2017-11" db="EMBL/GenBank/DDBJ databases">
        <title>Plasmodium falciparum NF54 genome assembly.</title>
        <authorList>
            <person name="Bryant J.M."/>
            <person name="Baumgarten S."/>
            <person name="Scheidig-Benatar C."/>
            <person name="Scherf A."/>
        </authorList>
    </citation>
    <scope>NUCLEOTIDE SEQUENCE [LARGE SCALE GENOMIC DNA]</scope>
    <source>
        <strain evidence="8">NF54</strain>
    </source>
</reference>
<reference evidence="10" key="2">
    <citation type="submission" date="2018-05" db="EMBL/GenBank/DDBJ databases">
        <title>Genome assembly of Plasmodium falciparum NF54 DiCre.</title>
        <authorList>
            <person name="Baumgarten S."/>
            <person name="Treeck M."/>
            <person name="Scherf A."/>
        </authorList>
    </citation>
    <scope>NUCLEOTIDE SEQUENCE [LARGE SCALE GENOMIC DNA]</scope>
    <source>
        <strain evidence="7">NF54</strain>
    </source>
</reference>
<reference evidence="11" key="3">
    <citation type="journal article" date="2021" name="Proc. Natl. Acad. Sci. U.S.A.">
        <title>Native structure of the RhopH complex, a key determinant of malaria parasite nutrient acquisition.</title>
        <authorList>
            <person name="Ho C.M."/>
            <person name="Jih J."/>
            <person name="Lai M."/>
            <person name="Li X."/>
            <person name="Goldberg D.E."/>
            <person name="Beck J.R."/>
            <person name="Zhou Z.H."/>
        </authorList>
    </citation>
    <scope>STRUCTURE BY ELECTRON MICROSCOPY (3.72 ANGSTROMS) IN RHOPH COMPLEX</scope>
    <scope>MASS SPECTROMETRY</scope>
    <scope>IDENTIFICATION IN RHOPH COMPLEX</scope>
    <scope>DISULFIDE BONDS</scope>
    <source>
        <strain evidence="5">NF54</strain>
    </source>
</reference>
<evidence type="ECO:0000250" key="1">
    <source>
        <dbReference type="UniProtKB" id="C0H571"/>
    </source>
</evidence>
<evidence type="ECO:0000250" key="2">
    <source>
        <dbReference type="UniProtKB" id="Q8I060"/>
    </source>
</evidence>
<evidence type="ECO:0000255" key="3"/>
<evidence type="ECO:0000269" key="4">
    <source>
    </source>
</evidence>
<evidence type="ECO:0000303" key="5">
    <source>
    </source>
</evidence>
<evidence type="ECO:0000305" key="6"/>
<evidence type="ECO:0000312" key="7">
    <source>
        <dbReference type="EMBL" id="KAF4330666.1"/>
    </source>
</evidence>
<evidence type="ECO:0000312" key="8">
    <source>
        <dbReference type="EMBL" id="PKC45016.1"/>
    </source>
</evidence>
<evidence type="ECO:0000312" key="9">
    <source>
        <dbReference type="Proteomes" id="UP000232684"/>
    </source>
</evidence>
<evidence type="ECO:0000312" key="10">
    <source>
        <dbReference type="Proteomes" id="UP000754359"/>
    </source>
</evidence>
<evidence type="ECO:0007744" key="11">
    <source>
        <dbReference type="PDB" id="7MRW"/>
    </source>
</evidence>
<gene>
    <name evidence="5" type="primary">RhopH2</name>
    <name evidence="8" type="ORF">CK202_4006</name>
    <name evidence="7" type="ORF">CYL21_1043</name>
</gene>
<sequence>MIKVTIFLLLSIFSFNLYGLELNEKVSIKYGAEQGVGSADSNTKLCSDILKYLYMDEYLSEGDKATFEKKCHNVIGNIRNTFSNKNTIKEGNEFLMSILHMKSLYGNNNNNNAGSESDVTLKSLYLSLKGSQNTEGESEVPSDDEINKTIMNFVKFNKYLLDNSNDIKKVHDFLVLTSQSNENLLPNKEKLFEQIVDQIKYFDEYFFASGGKIKVKKGYLKYNFLDIYKQPVCSAYLHLCSRYYESVSIYIRLKKVFNGIPAFLDKNCRKVKGEEFKKLMDMELKHNHIVERFDKYIISDDLYYVNMKVFDLKNVDKIQVSKIDDINNLNIYEHKETMHLSAKNLSRYIDIKKELNDEKAYKQLMSAIRKYVTTLTKADSDITYFVKQLDDEEIERFLIDLNFFLYNGFLRITEDKHLINADDVSPSYINLYRSNNIVALYILKTQYEENKLSEYRAHKFYRRKRVSNITNDMIKKDFTQTNALTNLPNLDNKKTTEYYLKEYENFVENFQPDLHDIMKLQLFFTMAFKDCNVNQNFTETSKKLWFDLLYAYDKFGWFYIHPNEVINSINKTDFVRHVLVSRNFLLKNNDQLTFLETQVAKIVEIINLSLEVDKSPDSLDFSIPMNFFNHKNGYHVMNDDKLKLLTSYEYIDSIANNYFFLSEYKNDVFRTGNNFKLYFNLPNIYSLAYQLFNELAININVITNVPLKKYLKYNASYAYFTLMNMIGKNHDIYSKGSRFVYASYILGLVFFIESHIDIARLKPKDFFFMKQSLPIIDHVYHKDLKTLKKNCTLLTDFMKINKNSQNYSLTHTEEMIKILGLLTVTLWAKEGKKSVYYDDDVSLYRKLMVSCVFNGGETIQEKLANNIEKSCDISQYGIKSKNLKDMIDINLSIHKWNPAEIEKLAYSFVLSCKMQKLMYKPMNVEKLPLEDYYKLSLAPDMVKTYHCYKLGKQAAELLESIILKKKFVRFRVTDAIDVYDFFYIKKVLSSRIKKEYNEFLQDKRAFEKKELETILNNSPFSEEQTMKLINSYECHWFTSYENFRILWMHASSNLGTGTYLKNFFSELWQNIRFLFKSKLKIRDMEYFSGDISQMNLLDYYSPMVHSESHCQEKMQVLFITLRDSKEENRSEIAQKVKSAYYQCKLDYYKNHHSDFIHRIHPNDFLNNKVYVLKQPYYLMSNVPLNNPKKVSRLFVTEGTLEYLLLDKINIPECFGPCTKLHFNKVVIKESKQRIYDMTINNALVPEIQPYNRRKYMTIYINEAYIKNIVSDALTSEEIKRHDIQKGNIKICMGKSTYLTEPILTEEHFNLTHKPVYDFSSVKHNLKVFHMKNEHLVSEDPNDDCFINYPLATINLDISDPYKEISEDLIKNLYILKSS</sequence>
<name>RCH2_PLAFO</name>
<organism evidence="9">
    <name type="scientific">Plasmodium falciparum (isolate NF54)</name>
    <dbReference type="NCBI Taxonomy" id="5843"/>
    <lineage>
        <taxon>Eukaryota</taxon>
        <taxon>Sar</taxon>
        <taxon>Alveolata</taxon>
        <taxon>Apicomplexa</taxon>
        <taxon>Aconoidasida</taxon>
        <taxon>Haemosporida</taxon>
        <taxon>Plasmodiidae</taxon>
        <taxon>Plasmodium</taxon>
        <taxon>Plasmodium (Laverania)</taxon>
    </lineage>
</organism>
<proteinExistence type="evidence at protein level"/>